<sequence length="405" mass="44782">MSESEQYSRNTLMDFIDYRPLDIEICDVTLRDGEQTPGVVFSKEQKLAVASELDSMGIEVIEAGFPVVSADEKEIVKEIANQGFNSRICCLSRAVKGDVDAALECDVDIVSIFIAMSDMHLKYKYHRSLEDMLGCAKEAIEYATDHGLKVRFAAEDASRTPVERLKQAFKEVENEYKVQYVSLADTVGILNPTTTNYLVSEIFKSVNTAICIHCHDDLGMATANTLAAAEAGAKQLHTTVNAIGERAGNASLEEVLVALRVQYGIERYDTTKLNSLSEMVSEYSGITPSVNKAVVGKNAFTHESGIHVAAILEEPRTYELFLPEMVGGKRNLVVGKHTGKKALKGIINSIGFCLEREELCALIEKVKVCTEEKHKSISRDQLERLITQVKQEQKPSGSEKEKFSI</sequence>
<protein>
    <recommendedName>
        <fullName>Homocitrate synthase AksA</fullName>
        <ecNumber evidence="1">2.3.3.14</ecNumber>
    </recommendedName>
    <alternativeName>
        <fullName>(R)-homo(2)citrate synthase</fullName>
        <ecNumber evidence="1">2.3.3.-</ecNumber>
    </alternativeName>
    <alternativeName>
        <fullName>(R)-homo(3)citrate synthase</fullName>
        <ecNumber evidence="1">2.3.3.-</ecNumber>
    </alternativeName>
</protein>
<evidence type="ECO:0000250" key="1">
    <source>
        <dbReference type="UniProtKB" id="Q57926"/>
    </source>
</evidence>
<evidence type="ECO:0000255" key="2">
    <source>
        <dbReference type="PROSITE-ProRule" id="PRU01151"/>
    </source>
</evidence>
<evidence type="ECO:0000305" key="3"/>
<organism>
    <name type="scientific">Methanosarcina mazei (strain ATCC BAA-159 / DSM 3647 / Goe1 / Go1 / JCM 11833 / OCM 88)</name>
    <name type="common">Methanosarcina frisia</name>
    <dbReference type="NCBI Taxonomy" id="192952"/>
    <lineage>
        <taxon>Archaea</taxon>
        <taxon>Methanobacteriati</taxon>
        <taxon>Methanobacteriota</taxon>
        <taxon>Stenosarchaea group</taxon>
        <taxon>Methanomicrobia</taxon>
        <taxon>Methanosarcinales</taxon>
        <taxon>Methanosarcinaceae</taxon>
        <taxon>Methanosarcina</taxon>
    </lineage>
</organism>
<gene>
    <name type="primary">aksA</name>
    <name type="ordered locus">MM_2785</name>
</gene>
<feature type="chain" id="PRO_0000140414" description="Homocitrate synthase AksA">
    <location>
        <begin position="1"/>
        <end position="405"/>
    </location>
</feature>
<feature type="domain" description="Pyruvate carboxyltransferase" evidence="2">
    <location>
        <begin position="23"/>
        <end position="274"/>
    </location>
</feature>
<keyword id="KW-0808">Transferase</keyword>
<comment type="function">
    <text evidence="1">Catalyzes the condensation of alpha-ketoglutarate and acetyl-CoA to form (R)-homocitrate. Can also catalyze the condensation of alpha-ketoadipate with acetyl-CoA to form (R)-homo(2)citrate, and the condensation of alpha-ketopimelate with acetyl-CoA to form (R)-homo(3)citrate. These reactions are part of the biosynthesis pathway of coenzyme B and biotin.</text>
</comment>
<comment type="catalytic activity">
    <reaction evidence="1">
        <text>acetyl-CoA + 2-oxoglutarate + H2O = (2R)-homocitrate + CoA + H(+)</text>
        <dbReference type="Rhea" id="RHEA:12929"/>
        <dbReference type="ChEBI" id="CHEBI:15377"/>
        <dbReference type="ChEBI" id="CHEBI:15378"/>
        <dbReference type="ChEBI" id="CHEBI:16810"/>
        <dbReference type="ChEBI" id="CHEBI:57287"/>
        <dbReference type="ChEBI" id="CHEBI:57288"/>
        <dbReference type="ChEBI" id="CHEBI:58884"/>
        <dbReference type="EC" id="2.3.3.14"/>
    </reaction>
    <physiologicalReaction direction="left-to-right" evidence="1">
        <dbReference type="Rhea" id="RHEA:12930"/>
    </physiologicalReaction>
</comment>
<comment type="catalytic activity">
    <reaction evidence="1">
        <text>2-oxoadipate + acetyl-CoA + H2O = (R)-dihomocitrate + CoA + H(+)</text>
        <dbReference type="Rhea" id="RHEA:44924"/>
        <dbReference type="ChEBI" id="CHEBI:15377"/>
        <dbReference type="ChEBI" id="CHEBI:15378"/>
        <dbReference type="ChEBI" id="CHEBI:57287"/>
        <dbReference type="ChEBI" id="CHEBI:57288"/>
        <dbReference type="ChEBI" id="CHEBI:57499"/>
        <dbReference type="ChEBI" id="CHEBI:72697"/>
    </reaction>
    <physiologicalReaction direction="left-to-right" evidence="1">
        <dbReference type="Rhea" id="RHEA:44925"/>
    </physiologicalReaction>
</comment>
<comment type="catalytic activity">
    <reaction evidence="1">
        <text>2-oxoheptanedioate + acetyl-CoA + H2O = (R)-trihomocitrate + CoA + H(+)</text>
        <dbReference type="Rhea" id="RHEA:44928"/>
        <dbReference type="ChEBI" id="CHEBI:15377"/>
        <dbReference type="ChEBI" id="CHEBI:15378"/>
        <dbReference type="ChEBI" id="CHEBI:57287"/>
        <dbReference type="ChEBI" id="CHEBI:57288"/>
        <dbReference type="ChEBI" id="CHEBI:72699"/>
        <dbReference type="ChEBI" id="CHEBI:72701"/>
    </reaction>
    <physiologicalReaction direction="left-to-right" evidence="1">
        <dbReference type="Rhea" id="RHEA:44929"/>
    </physiologicalReaction>
</comment>
<comment type="pathway">
    <text evidence="1">Organic acid metabolism; 2-oxosuberate biosynthesis.</text>
</comment>
<comment type="similarity">
    <text evidence="3">Belongs to the alpha-IPM synthase/homocitrate synthase family.</text>
</comment>
<comment type="sequence caution" evidence="3">
    <conflict type="erroneous initiation">
        <sequence resource="EMBL-CDS" id="AAM32481"/>
    </conflict>
    <text>Extended N-terminus.</text>
</comment>
<accession>P58967</accession>
<dbReference type="EC" id="2.3.3.14" evidence="1"/>
<dbReference type="EC" id="2.3.3.-" evidence="1"/>
<dbReference type="EMBL" id="AE008384">
    <property type="protein sequence ID" value="AAM32481.1"/>
    <property type="status" value="ALT_INIT"/>
    <property type="molecule type" value="Genomic_DNA"/>
</dbReference>
<dbReference type="RefSeq" id="WP_048036652.1">
    <property type="nucleotide sequence ID" value="NC_003901.1"/>
</dbReference>
<dbReference type="SMR" id="P58967"/>
<dbReference type="KEGG" id="mma:MM_2785"/>
<dbReference type="PATRIC" id="fig|192952.21.peg.3212"/>
<dbReference type="eggNOG" id="arCOG02092">
    <property type="taxonomic scope" value="Archaea"/>
</dbReference>
<dbReference type="HOGENOM" id="CLU_022158_4_2_2"/>
<dbReference type="UniPathway" id="UPA00919"/>
<dbReference type="Proteomes" id="UP000000595">
    <property type="component" value="Chromosome"/>
</dbReference>
<dbReference type="GO" id="GO:0004410">
    <property type="term" value="F:homocitrate synthase activity"/>
    <property type="evidence" value="ECO:0007669"/>
    <property type="project" value="UniProtKB-EC"/>
</dbReference>
<dbReference type="GO" id="GO:0009058">
    <property type="term" value="P:biosynthetic process"/>
    <property type="evidence" value="ECO:0007669"/>
    <property type="project" value="UniProtKB-ARBA"/>
</dbReference>
<dbReference type="GO" id="GO:0019752">
    <property type="term" value="P:carboxylic acid metabolic process"/>
    <property type="evidence" value="ECO:0007669"/>
    <property type="project" value="InterPro"/>
</dbReference>
<dbReference type="CDD" id="cd07940">
    <property type="entry name" value="DRE_TIM_IPMS"/>
    <property type="match status" value="1"/>
</dbReference>
<dbReference type="FunFam" id="3.20.20.70:FF:000010">
    <property type="entry name" value="2-isopropylmalate synthase"/>
    <property type="match status" value="1"/>
</dbReference>
<dbReference type="Gene3D" id="1.10.238.260">
    <property type="match status" value="1"/>
</dbReference>
<dbReference type="Gene3D" id="3.20.20.70">
    <property type="entry name" value="Aldolase class I"/>
    <property type="match status" value="1"/>
</dbReference>
<dbReference type="InterPro" id="IPR002034">
    <property type="entry name" value="AIPM/Hcit_synth_CS"/>
</dbReference>
<dbReference type="InterPro" id="IPR013785">
    <property type="entry name" value="Aldolase_TIM"/>
</dbReference>
<dbReference type="InterPro" id="IPR054691">
    <property type="entry name" value="LeuA/HCS_post-cat"/>
</dbReference>
<dbReference type="InterPro" id="IPR000891">
    <property type="entry name" value="PYR_CT"/>
</dbReference>
<dbReference type="PANTHER" id="PTHR42880">
    <property type="entry name" value="HOMOCITRATE SYNTHASE"/>
    <property type="match status" value="1"/>
</dbReference>
<dbReference type="PANTHER" id="PTHR42880:SF1">
    <property type="entry name" value="ISOPROPYLMALATE_HOMOCITRATE_CITRAMALATE SYNTHASE FAMILY PROTEIN"/>
    <property type="match status" value="1"/>
</dbReference>
<dbReference type="Pfam" id="PF22617">
    <property type="entry name" value="HCS_D2"/>
    <property type="match status" value="1"/>
</dbReference>
<dbReference type="Pfam" id="PF00682">
    <property type="entry name" value="HMGL-like"/>
    <property type="match status" value="1"/>
</dbReference>
<dbReference type="SUPFAM" id="SSF51569">
    <property type="entry name" value="Aldolase"/>
    <property type="match status" value="1"/>
</dbReference>
<dbReference type="PROSITE" id="PS00815">
    <property type="entry name" value="AIPM_HOMOCIT_SYNTH_1"/>
    <property type="match status" value="1"/>
</dbReference>
<dbReference type="PROSITE" id="PS00816">
    <property type="entry name" value="AIPM_HOMOCIT_SYNTH_2"/>
    <property type="match status" value="1"/>
</dbReference>
<dbReference type="PROSITE" id="PS50991">
    <property type="entry name" value="PYR_CT"/>
    <property type="match status" value="1"/>
</dbReference>
<proteinExistence type="inferred from homology"/>
<reference key="1">
    <citation type="journal article" date="2002" name="J. Mol. Microbiol. Biotechnol.">
        <title>The genome of Methanosarcina mazei: evidence for lateral gene transfer between Bacteria and Archaea.</title>
        <authorList>
            <person name="Deppenmeier U."/>
            <person name="Johann A."/>
            <person name="Hartsch T."/>
            <person name="Merkl R."/>
            <person name="Schmitz R.A."/>
            <person name="Martinez-Arias R."/>
            <person name="Henne A."/>
            <person name="Wiezer A."/>
            <person name="Baeumer S."/>
            <person name="Jacobi C."/>
            <person name="Brueggemann H."/>
            <person name="Lienard T."/>
            <person name="Christmann A."/>
            <person name="Boemecke M."/>
            <person name="Steckel S."/>
            <person name="Bhattacharyya A."/>
            <person name="Lykidis A."/>
            <person name="Overbeek R."/>
            <person name="Klenk H.-P."/>
            <person name="Gunsalus R.P."/>
            <person name="Fritz H.-J."/>
            <person name="Gottschalk G."/>
        </authorList>
    </citation>
    <scope>NUCLEOTIDE SEQUENCE [LARGE SCALE GENOMIC DNA]</scope>
    <source>
        <strain>ATCC BAA-159 / DSM 3647 / Goe1 / Go1 / JCM 11833 / OCM 88</strain>
    </source>
</reference>
<name>AKSA_METMA</name>